<comment type="similarity">
    <text evidence="1">Belongs to the UPF0145 family.</text>
</comment>
<reference key="1">
    <citation type="journal article" date="2006" name="Genome Res.">
        <title>Skewed genomic variability in strains of the toxigenic bacterial pathogen, Clostridium perfringens.</title>
        <authorList>
            <person name="Myers G.S.A."/>
            <person name="Rasko D.A."/>
            <person name="Cheung J.K."/>
            <person name="Ravel J."/>
            <person name="Seshadri R."/>
            <person name="DeBoy R.T."/>
            <person name="Ren Q."/>
            <person name="Varga J."/>
            <person name="Awad M.M."/>
            <person name="Brinkac L.M."/>
            <person name="Daugherty S.C."/>
            <person name="Haft D.H."/>
            <person name="Dodson R.J."/>
            <person name="Madupu R."/>
            <person name="Nelson W.C."/>
            <person name="Rosovitz M.J."/>
            <person name="Sullivan S.A."/>
            <person name="Khouri H."/>
            <person name="Dimitrov G.I."/>
            <person name="Watkins K.L."/>
            <person name="Mulligan S."/>
            <person name="Benton J."/>
            <person name="Radune D."/>
            <person name="Fisher D.J."/>
            <person name="Atkins H.S."/>
            <person name="Hiscox T."/>
            <person name="Jost B.H."/>
            <person name="Billington S.J."/>
            <person name="Songer J.G."/>
            <person name="McClane B.A."/>
            <person name="Titball R.W."/>
            <person name="Rood J.I."/>
            <person name="Melville S.B."/>
            <person name="Paulsen I.T."/>
        </authorList>
    </citation>
    <scope>NUCLEOTIDE SEQUENCE [LARGE SCALE GENOMIC DNA]</scope>
    <source>
        <strain>ATCC 13124 / DSM 756 / JCM 1290 / NCIMB 6125 / NCTC 8237 / S 107 / Type A</strain>
    </source>
</reference>
<protein>
    <recommendedName>
        <fullName evidence="1">UPF0145 protein CPF_0876</fullName>
    </recommendedName>
</protein>
<name>Y876_CLOP1</name>
<proteinExistence type="inferred from homology"/>
<gene>
    <name type="ordered locus">CPF_0876</name>
</gene>
<organism>
    <name type="scientific">Clostridium perfringens (strain ATCC 13124 / DSM 756 / JCM 1290 / NCIMB 6125 / NCTC 8237 / Type A)</name>
    <dbReference type="NCBI Taxonomy" id="195103"/>
    <lineage>
        <taxon>Bacteria</taxon>
        <taxon>Bacillati</taxon>
        <taxon>Bacillota</taxon>
        <taxon>Clostridia</taxon>
        <taxon>Eubacteriales</taxon>
        <taxon>Clostridiaceae</taxon>
        <taxon>Clostridium</taxon>
    </lineage>
</organism>
<feature type="chain" id="PRO_1000012990" description="UPF0145 protein CPF_0876">
    <location>
        <begin position="1"/>
        <end position="106"/>
    </location>
</feature>
<evidence type="ECO:0000255" key="1">
    <source>
        <dbReference type="HAMAP-Rule" id="MF_00338"/>
    </source>
</evidence>
<dbReference type="EMBL" id="CP000246">
    <property type="protein sequence ID" value="ABG82543.1"/>
    <property type="molecule type" value="Genomic_DNA"/>
</dbReference>
<dbReference type="RefSeq" id="WP_003453892.1">
    <property type="nucleotide sequence ID" value="NC_008261.1"/>
</dbReference>
<dbReference type="SMR" id="Q0TSR5"/>
<dbReference type="PaxDb" id="195103-CPF_0876"/>
<dbReference type="KEGG" id="cpf:CPF_0876"/>
<dbReference type="eggNOG" id="COG0393">
    <property type="taxonomic scope" value="Bacteria"/>
</dbReference>
<dbReference type="HOGENOM" id="CLU_117144_1_2_9"/>
<dbReference type="Proteomes" id="UP000001823">
    <property type="component" value="Chromosome"/>
</dbReference>
<dbReference type="Gene3D" id="3.30.110.70">
    <property type="entry name" value="Hypothetical protein apc22750. Chain B"/>
    <property type="match status" value="1"/>
</dbReference>
<dbReference type="HAMAP" id="MF_00338">
    <property type="entry name" value="UPF0145"/>
    <property type="match status" value="1"/>
</dbReference>
<dbReference type="InterPro" id="IPR035439">
    <property type="entry name" value="UPF0145_dom_sf"/>
</dbReference>
<dbReference type="InterPro" id="IPR002765">
    <property type="entry name" value="UPF0145_YbjQ-like"/>
</dbReference>
<dbReference type="PANTHER" id="PTHR34068:SF2">
    <property type="entry name" value="UPF0145 PROTEIN SCO3412"/>
    <property type="match status" value="1"/>
</dbReference>
<dbReference type="PANTHER" id="PTHR34068">
    <property type="entry name" value="UPF0145 PROTEIN YBJQ"/>
    <property type="match status" value="1"/>
</dbReference>
<dbReference type="Pfam" id="PF01906">
    <property type="entry name" value="YbjQ_1"/>
    <property type="match status" value="1"/>
</dbReference>
<dbReference type="SUPFAM" id="SSF117782">
    <property type="entry name" value="YbjQ-like"/>
    <property type="match status" value="1"/>
</dbReference>
<accession>Q0TSR5</accession>
<sequence length="106" mass="11085">MLVLTTETIPGKGIKEVKGLVKGSTVRCKNIGKDIASSFKNLVGGEMNSYTEMLTEARQIAIGRMVDEAESLGANAIIGMRLVSSSLAAGAAEMVAYGTAVIYEDA</sequence>